<sequence>MYGIEYTTTLIFLILFVLLNYILKSITRVMDYILYRFLLFIVIVTPFVNSQNYGINLPITGSMDTNYQNVSTSKPFLTSTLCLYYPTEAETEIADSSWKDTLSQLFLTKGWPTGSVYLKSYTDIATFSINPQLYCDYNIVLMKYNANAELDMSELAALILNEWLCNPMDITLYYYQQTDEANKWISMGDSCTIKVCPLNTQTLGIGCLTTDTTTFEEVATAEKLAITDVVDGVNYKINVTTATCTIRNCKKLGPRENVAVIQVGGSNILDITADPTTAPQTERMMRVNWKKWWQVFYTIVDYVNQIIQAMSKRSRSLDSAAFYYRI</sequence>
<evidence type="ECO:0000255" key="1"/>
<evidence type="ECO:0000255" key="2">
    <source>
        <dbReference type="HAMAP-Rule" id="MF_04131"/>
    </source>
</evidence>
<evidence type="ECO:0000305" key="3"/>
<reference key="1">
    <citation type="journal article" date="1991" name="J. Gen. Virol.">
        <title>Molecular and antigenic analyses of serotypes 8 and 10 of bovine rotaviruses in Thailand.</title>
        <authorList>
            <person name="Taniguchi K."/>
            <person name="Urasawa T."/>
            <person name="Pongsuwanna Y."/>
            <person name="Choonthanom M."/>
            <person name="Jayavasu C."/>
            <person name="Urasawa S."/>
        </authorList>
    </citation>
    <scope>NUCLEOTIDE SEQUENCE [MRNA]</scope>
</reference>
<proteinExistence type="evidence at transcript level"/>
<accession>Q00252</accession>
<organism>
    <name type="scientific">Rotavirus A (isolate RVA/Cow/Thailand/A5/1988/G8P6[1])</name>
    <name type="common">RV-A</name>
    <dbReference type="NCBI Taxonomy" id="36440"/>
    <lineage>
        <taxon>Viruses</taxon>
        <taxon>Riboviria</taxon>
        <taxon>Orthornavirae</taxon>
        <taxon>Duplornaviricota</taxon>
        <taxon>Resentoviricetes</taxon>
        <taxon>Reovirales</taxon>
        <taxon>Sedoreoviridae</taxon>
        <taxon>Rotavirus</taxon>
        <taxon>Rotavirus A</taxon>
    </lineage>
</organism>
<dbReference type="EMBL" id="D01054">
    <property type="protein sequence ID" value="BAA00856.1"/>
    <property type="molecule type" value="mRNA"/>
</dbReference>
<dbReference type="SMR" id="Q00252"/>
<dbReference type="GO" id="GO:0044166">
    <property type="term" value="C:host cell endoplasmic reticulum lumen"/>
    <property type="evidence" value="ECO:0007669"/>
    <property type="project" value="UniProtKB-SubCell"/>
</dbReference>
<dbReference type="GO" id="GO:0039621">
    <property type="term" value="C:T=13 icosahedral viral capsid"/>
    <property type="evidence" value="ECO:0007669"/>
    <property type="project" value="UniProtKB-UniRule"/>
</dbReference>
<dbReference type="GO" id="GO:0039624">
    <property type="term" value="C:viral outer capsid"/>
    <property type="evidence" value="ECO:0007669"/>
    <property type="project" value="UniProtKB-UniRule"/>
</dbReference>
<dbReference type="GO" id="GO:0046872">
    <property type="term" value="F:metal ion binding"/>
    <property type="evidence" value="ECO:0007669"/>
    <property type="project" value="UniProtKB-KW"/>
</dbReference>
<dbReference type="Gene3D" id="3.40.50.11130">
    <property type="entry name" value="Glycoprotein VP7, domain 1"/>
    <property type="match status" value="1"/>
</dbReference>
<dbReference type="Gene3D" id="2.60.120.800">
    <property type="entry name" value="Rotavirus outer-layer protein VP7, domain 2"/>
    <property type="match status" value="1"/>
</dbReference>
<dbReference type="HAMAP" id="MF_04130">
    <property type="entry name" value="Rota_VP7"/>
    <property type="match status" value="1"/>
</dbReference>
<dbReference type="HAMAP" id="MF_04131">
    <property type="entry name" value="Rota_VP7_A"/>
    <property type="match status" value="1"/>
</dbReference>
<dbReference type="InterPro" id="IPR001963">
    <property type="entry name" value="VP7"/>
</dbReference>
<dbReference type="InterPro" id="IPR042207">
    <property type="entry name" value="VP7_1"/>
</dbReference>
<dbReference type="InterPro" id="IPR042210">
    <property type="entry name" value="VP7_2"/>
</dbReference>
<dbReference type="Pfam" id="PF00434">
    <property type="entry name" value="VP7"/>
    <property type="match status" value="1"/>
</dbReference>
<keyword id="KW-0024">Alternative initiation</keyword>
<keyword id="KW-0106">Calcium</keyword>
<keyword id="KW-0167">Capsid protein</keyword>
<keyword id="KW-1015">Disulfide bond</keyword>
<keyword id="KW-0325">Glycoprotein</keyword>
<keyword id="KW-1038">Host endoplasmic reticulum</keyword>
<keyword id="KW-0945">Host-virus interaction</keyword>
<keyword id="KW-0479">Metal-binding</keyword>
<keyword id="KW-1152">Outer capsid protein</keyword>
<keyword id="KW-0732">Signal</keyword>
<keyword id="KW-1146">T=13 icosahedral capsid protein</keyword>
<keyword id="KW-0946">Virion</keyword>
<name>VP7_ROTB5</name>
<protein>
    <recommendedName>
        <fullName evidence="2">Outer capsid glycoprotein VP7</fullName>
    </recommendedName>
</protein>
<comment type="function">
    <text evidence="2">Calcium-binding protein that interacts with rotavirus cell receptors once the initial attachment by VP4 has been achieved. Rotavirus attachment and entry into the host cell probably involves multiple sequential contacts between the outer capsid proteins VP4 and VP7, and the cell receptors. Following entry into the host cell, low intracellular or intravesicular Ca(2+) concentration probably causes the calcium-stabilized VP7 trimers to dissociate from the virion. This step is probably necessary for the membrane-disrupting entry step and the release of VP4, which is locked onto the virion by VP7.</text>
</comment>
<comment type="subunit">
    <text evidence="2">Homotrimer; disulfide-linked. 2 Ca(2+) ions bound at each subunit interface in the trimer hold the trimer together. Interacts with the intermediate capsid protein VP6. Interacts with the outer capsid protein VP5*.</text>
</comment>
<comment type="subcellular location">
    <subcellularLocation>
        <location evidence="2">Virion</location>
    </subcellularLocation>
    <subcellularLocation>
        <location evidence="2">Host endoplasmic reticulum lumen</location>
    </subcellularLocation>
    <text evidence="2">The outer layer contains 780 copies of VP7, grouped as 260 trimers. Immature double-layered particles assembled in the cytoplasm bud across the membrane of the endoplasmic reticulum, acquiring during this process a transient lipid membrane that is modified with the ER resident viral glycoproteins NSP4 and VP7; these enveloped particles also contain VP4. As the particles move towards the interior of the ER cisternae, the transient lipid membrane and the non-structural protein NSP4 are lost, while the virus surface proteins VP4 and VP7 rearrange to form the outermost virus protein layer, yielding mature infectious triple-layered particles.</text>
</comment>
<comment type="alternative products">
    <event type="alternative initiation"/>
    <isoform>
        <id>Q00252-1</id>
        <name>1</name>
        <sequence type="displayed"/>
    </isoform>
    <isoform>
        <id>Q00252-2</id>
        <name>2</name>
        <sequence type="described" ref="VSP_038585"/>
    </isoform>
</comment>
<comment type="PTM">
    <text evidence="2">N-glycosylated.</text>
</comment>
<comment type="PTM">
    <text evidence="2">The N-terminus is blocked possibly by pyroglutamic acid.</text>
</comment>
<comment type="miscellaneous">
    <text evidence="2">Some rotavirus strains are neuraminidase-sensitive and require sialic acid to attach to the cell surface. Some rotavirus strains are integrin-dependent. Some rotavirus strains depend on ganglioside for their entry into the host cell. Hsp70 also seems to be involved in the entry of some strains.</text>
</comment>
<comment type="miscellaneous">
    <text evidence="2">In group A rotaviruses, VP7 defines the G serotype.</text>
</comment>
<comment type="miscellaneous">
    <molecule>Isoform 2</molecule>
    <text evidence="3">Produced by alternative initiation at Met-30 of isoform 1.</text>
</comment>
<comment type="similarity">
    <text evidence="2">Belongs to the rotavirus VP7 family.</text>
</comment>
<organismHost>
    <name type="scientific">Bos taurus</name>
    <name type="common">Bovine</name>
    <dbReference type="NCBI Taxonomy" id="9913"/>
</organismHost>
<feature type="signal peptide" evidence="2">
    <location>
        <begin position="1"/>
        <end position="50"/>
    </location>
</feature>
<feature type="chain" id="PRO_0000149579" description="Outer capsid glycoprotein VP7" evidence="2">
    <location>
        <begin position="51"/>
        <end position="326"/>
    </location>
</feature>
<feature type="region of interest" description="CNP motif; interaction with ITGAV/ITGB3" evidence="2">
    <location>
        <begin position="165"/>
        <end position="167"/>
    </location>
</feature>
<feature type="region of interest" description="GPR motif; interaction with ITGAX/ITGB2" evidence="2">
    <location>
        <begin position="253"/>
        <end position="255"/>
    </location>
</feature>
<feature type="binding site" evidence="2">
    <location>
        <position position="95"/>
    </location>
    <ligand>
        <name>Ca(2+)</name>
        <dbReference type="ChEBI" id="CHEBI:29108"/>
        <label>1</label>
    </ligand>
</feature>
<feature type="binding site" evidence="2">
    <location>
        <position position="177"/>
    </location>
    <ligand>
        <name>Ca(2+)</name>
        <dbReference type="ChEBI" id="CHEBI:29108"/>
        <label>2</label>
    </ligand>
</feature>
<feature type="binding site" evidence="2">
    <location>
        <position position="206"/>
    </location>
    <ligand>
        <name>Ca(2+)</name>
        <dbReference type="ChEBI" id="CHEBI:29108"/>
        <label>1</label>
    </ligand>
</feature>
<feature type="binding site" evidence="2">
    <location>
        <position position="214"/>
    </location>
    <ligand>
        <name>Ca(2+)</name>
        <dbReference type="ChEBI" id="CHEBI:29108"/>
        <label>1</label>
    </ligand>
</feature>
<feature type="binding site" evidence="2">
    <location>
        <position position="216"/>
    </location>
    <ligand>
        <name>Ca(2+)</name>
        <dbReference type="ChEBI" id="CHEBI:29108"/>
        <label>1</label>
    </ligand>
</feature>
<feature type="binding site" evidence="2">
    <location>
        <position position="228"/>
    </location>
    <ligand>
        <name>Ca(2+)</name>
        <dbReference type="ChEBI" id="CHEBI:29108"/>
        <label>2</label>
    </ligand>
</feature>
<feature type="binding site" evidence="2">
    <location>
        <position position="229"/>
    </location>
    <ligand>
        <name>Ca(2+)</name>
        <dbReference type="ChEBI" id="CHEBI:29108"/>
        <label>2</label>
    </ligand>
</feature>
<feature type="binding site" evidence="2">
    <location>
        <position position="231"/>
    </location>
    <ligand>
        <name>Ca(2+)</name>
        <dbReference type="ChEBI" id="CHEBI:29108"/>
        <label>2</label>
    </ligand>
</feature>
<feature type="binding site" evidence="2">
    <location>
        <position position="301"/>
    </location>
    <ligand>
        <name>Ca(2+)</name>
        <dbReference type="ChEBI" id="CHEBI:29108"/>
        <label>2</label>
    </ligand>
</feature>
<feature type="glycosylation site" description="N-linked (GlcNAc...) asparagine; by host" evidence="1">
    <location>
        <position position="69"/>
    </location>
</feature>
<feature type="glycosylation site" description="N-linked (GlcNAc...) asparagine; by host" evidence="1">
    <location>
        <position position="238"/>
    </location>
</feature>
<feature type="disulfide bond" evidence="2">
    <location>
        <begin position="82"/>
        <end position="135"/>
    </location>
</feature>
<feature type="disulfide bond" evidence="2">
    <location>
        <begin position="165"/>
        <end position="249"/>
    </location>
</feature>
<feature type="disulfide bond" evidence="2">
    <location>
        <begin position="191"/>
        <end position="244"/>
    </location>
</feature>
<feature type="disulfide bond" evidence="2">
    <location>
        <begin position="196"/>
        <end position="207"/>
    </location>
</feature>
<feature type="splice variant" id="VSP_038585" description="In isoform 2." evidence="3">
    <location>
        <begin position="1"/>
        <end position="29"/>
    </location>
</feature>